<proteinExistence type="inferred from homology"/>
<protein>
    <recommendedName>
        <fullName evidence="1">6,7-dimethyl-8-ribityllumazine synthase</fullName>
        <shortName evidence="1">DMRL synthase</shortName>
        <shortName evidence="1">LS</shortName>
        <shortName evidence="1">Lumazine synthase</shortName>
        <ecNumber evidence="1">2.5.1.78</ecNumber>
    </recommendedName>
</protein>
<name>RISB_PYRFU</name>
<accession>Q8U4L8</accession>
<sequence>MKVRTFEGDYRGEGLRIAVVVSRFNDLLTEELLKGALDCFKRHGVEEVHIFRVPGSFEIPITVKKIAKRGYDAILALGVLIKGETRHFELVASQVSRGIAQVSLEEGIPVIFGIVPAEDEIQAISRSGIKSNRGFEYALTTIEMANLFRKLGENNER</sequence>
<keyword id="KW-1185">Reference proteome</keyword>
<keyword id="KW-0686">Riboflavin biosynthesis</keyword>
<keyword id="KW-0808">Transferase</keyword>
<dbReference type="EC" id="2.5.1.78" evidence="1"/>
<dbReference type="EMBL" id="AE009950">
    <property type="protein sequence ID" value="AAL80187.1"/>
    <property type="molecule type" value="Genomic_DNA"/>
</dbReference>
<dbReference type="RefSeq" id="WP_011011175.1">
    <property type="nucleotide sequence ID" value="NZ_CP023154.1"/>
</dbReference>
<dbReference type="SMR" id="Q8U4L8"/>
<dbReference type="STRING" id="186497.PF0063"/>
<dbReference type="PaxDb" id="186497-PF0063"/>
<dbReference type="GeneID" id="41711850"/>
<dbReference type="KEGG" id="pfu:PF0063"/>
<dbReference type="PATRIC" id="fig|186497.12.peg.67"/>
<dbReference type="eggNOG" id="arCOG01323">
    <property type="taxonomic scope" value="Archaea"/>
</dbReference>
<dbReference type="HOGENOM" id="CLU_089358_1_1_2"/>
<dbReference type="OrthoDB" id="7610at2157"/>
<dbReference type="PhylomeDB" id="Q8U4L8"/>
<dbReference type="UniPathway" id="UPA00275">
    <property type="reaction ID" value="UER00404"/>
</dbReference>
<dbReference type="Proteomes" id="UP000001013">
    <property type="component" value="Chromosome"/>
</dbReference>
<dbReference type="GO" id="GO:0009349">
    <property type="term" value="C:riboflavin synthase complex"/>
    <property type="evidence" value="ECO:0007669"/>
    <property type="project" value="InterPro"/>
</dbReference>
<dbReference type="GO" id="GO:0000906">
    <property type="term" value="F:6,7-dimethyl-8-ribityllumazine synthase activity"/>
    <property type="evidence" value="ECO:0007669"/>
    <property type="project" value="UniProtKB-UniRule"/>
</dbReference>
<dbReference type="GO" id="GO:0009231">
    <property type="term" value="P:riboflavin biosynthetic process"/>
    <property type="evidence" value="ECO:0007669"/>
    <property type="project" value="UniProtKB-UniRule"/>
</dbReference>
<dbReference type="CDD" id="cd09209">
    <property type="entry name" value="Lumazine_synthase-I"/>
    <property type="match status" value="1"/>
</dbReference>
<dbReference type="Gene3D" id="3.40.50.960">
    <property type="entry name" value="Lumazine/riboflavin synthase"/>
    <property type="match status" value="1"/>
</dbReference>
<dbReference type="HAMAP" id="MF_00178">
    <property type="entry name" value="Lumazine_synth"/>
    <property type="match status" value="1"/>
</dbReference>
<dbReference type="InterPro" id="IPR034964">
    <property type="entry name" value="LS"/>
</dbReference>
<dbReference type="InterPro" id="IPR002180">
    <property type="entry name" value="LS/RS"/>
</dbReference>
<dbReference type="InterPro" id="IPR036467">
    <property type="entry name" value="LS/RS_sf"/>
</dbReference>
<dbReference type="NCBIfam" id="TIGR00114">
    <property type="entry name" value="lumazine-synth"/>
    <property type="match status" value="1"/>
</dbReference>
<dbReference type="PANTHER" id="PTHR21058:SF0">
    <property type="entry name" value="6,7-DIMETHYL-8-RIBITYLLUMAZINE SYNTHASE"/>
    <property type="match status" value="1"/>
</dbReference>
<dbReference type="PANTHER" id="PTHR21058">
    <property type="entry name" value="6,7-DIMETHYL-8-RIBITYLLUMAZINE SYNTHASE DMRL SYNTHASE LUMAZINE SYNTHASE"/>
    <property type="match status" value="1"/>
</dbReference>
<dbReference type="Pfam" id="PF00885">
    <property type="entry name" value="DMRL_synthase"/>
    <property type="match status" value="1"/>
</dbReference>
<dbReference type="SUPFAM" id="SSF52121">
    <property type="entry name" value="Lumazine synthase"/>
    <property type="match status" value="1"/>
</dbReference>
<feature type="chain" id="PRO_0000134850" description="6,7-dimethyl-8-ribityllumazine synthase">
    <location>
        <begin position="1"/>
        <end position="157"/>
    </location>
</feature>
<feature type="active site" description="Proton donor" evidence="1">
    <location>
        <position position="87"/>
    </location>
</feature>
<feature type="binding site" evidence="1">
    <location>
        <position position="24"/>
    </location>
    <ligand>
        <name>5-amino-6-(D-ribitylamino)uracil</name>
        <dbReference type="ChEBI" id="CHEBI:15934"/>
    </ligand>
</feature>
<feature type="binding site" evidence="1">
    <location>
        <begin position="56"/>
        <end position="58"/>
    </location>
    <ligand>
        <name>5-amino-6-(D-ribitylamino)uracil</name>
        <dbReference type="ChEBI" id="CHEBI:15934"/>
    </ligand>
</feature>
<feature type="binding site" evidence="1">
    <location>
        <begin position="79"/>
        <end position="81"/>
    </location>
    <ligand>
        <name>5-amino-6-(D-ribitylamino)uracil</name>
        <dbReference type="ChEBI" id="CHEBI:15934"/>
    </ligand>
</feature>
<feature type="binding site" evidence="1">
    <location>
        <begin position="84"/>
        <end position="85"/>
    </location>
    <ligand>
        <name>(2S)-2-hydroxy-3-oxobutyl phosphate</name>
        <dbReference type="ChEBI" id="CHEBI:58830"/>
    </ligand>
</feature>
<feature type="binding site" evidence="1">
    <location>
        <position position="112"/>
    </location>
    <ligand>
        <name>5-amino-6-(D-ribitylamino)uracil</name>
        <dbReference type="ChEBI" id="CHEBI:15934"/>
    </ligand>
</feature>
<feature type="binding site" evidence="1">
    <location>
        <position position="126"/>
    </location>
    <ligand>
        <name>(2S)-2-hydroxy-3-oxobutyl phosphate</name>
        <dbReference type="ChEBI" id="CHEBI:58830"/>
    </ligand>
</feature>
<comment type="function">
    <text evidence="1">Catalyzes the formation of 6,7-dimethyl-8-ribityllumazine by condensation of 5-amino-6-(D-ribitylamino)uracil with 3,4-dihydroxy-2-butanone 4-phosphate. This is the penultimate step in the biosynthesis of riboflavin.</text>
</comment>
<comment type="catalytic activity">
    <reaction evidence="1">
        <text>(2S)-2-hydroxy-3-oxobutyl phosphate + 5-amino-6-(D-ribitylamino)uracil = 6,7-dimethyl-8-(1-D-ribityl)lumazine + phosphate + 2 H2O + H(+)</text>
        <dbReference type="Rhea" id="RHEA:26152"/>
        <dbReference type="ChEBI" id="CHEBI:15377"/>
        <dbReference type="ChEBI" id="CHEBI:15378"/>
        <dbReference type="ChEBI" id="CHEBI:15934"/>
        <dbReference type="ChEBI" id="CHEBI:43474"/>
        <dbReference type="ChEBI" id="CHEBI:58201"/>
        <dbReference type="ChEBI" id="CHEBI:58830"/>
        <dbReference type="EC" id="2.5.1.78"/>
    </reaction>
</comment>
<comment type="pathway">
    <text evidence="1">Cofactor biosynthesis; riboflavin biosynthesis; riboflavin from 2-hydroxy-3-oxobutyl phosphate and 5-amino-6-(D-ribitylamino)uracil: step 1/2.</text>
</comment>
<comment type="similarity">
    <text evidence="1">Belongs to the DMRL synthase family.</text>
</comment>
<organism>
    <name type="scientific">Pyrococcus furiosus (strain ATCC 43587 / DSM 3638 / JCM 8422 / Vc1)</name>
    <dbReference type="NCBI Taxonomy" id="186497"/>
    <lineage>
        <taxon>Archaea</taxon>
        <taxon>Methanobacteriati</taxon>
        <taxon>Methanobacteriota</taxon>
        <taxon>Thermococci</taxon>
        <taxon>Thermococcales</taxon>
        <taxon>Thermococcaceae</taxon>
        <taxon>Pyrococcus</taxon>
    </lineage>
</organism>
<gene>
    <name evidence="1" type="primary">ribH</name>
    <name type="ordered locus">PF0063</name>
</gene>
<evidence type="ECO:0000255" key="1">
    <source>
        <dbReference type="HAMAP-Rule" id="MF_00178"/>
    </source>
</evidence>
<reference key="1">
    <citation type="journal article" date="1999" name="Genetics">
        <title>Divergence of the hyperthermophilic archaea Pyrococcus furiosus and P. horikoshii inferred from complete genomic sequences.</title>
        <authorList>
            <person name="Maeder D.L."/>
            <person name="Weiss R.B."/>
            <person name="Dunn D.M."/>
            <person name="Cherry J.L."/>
            <person name="Gonzalez J.M."/>
            <person name="DiRuggiero J."/>
            <person name="Robb F.T."/>
        </authorList>
    </citation>
    <scope>NUCLEOTIDE SEQUENCE [LARGE SCALE GENOMIC DNA]</scope>
    <source>
        <strain>ATCC 43587 / DSM 3638 / JCM 8422 / Vc1</strain>
    </source>
</reference>